<reference key="1">
    <citation type="journal article" date="2004" name="Proc. Natl. Acad. Sci. U.S.A.">
        <title>Genome sequence of the deep-sea gamma-proteobacterium Idiomarina loihiensis reveals amino acid fermentation as a source of carbon and energy.</title>
        <authorList>
            <person name="Hou S."/>
            <person name="Saw J.H."/>
            <person name="Lee K.S."/>
            <person name="Freitas T.A."/>
            <person name="Belisle C."/>
            <person name="Kawarabayasi Y."/>
            <person name="Donachie S.P."/>
            <person name="Pikina A."/>
            <person name="Galperin M.Y."/>
            <person name="Koonin E.V."/>
            <person name="Makarova K.S."/>
            <person name="Omelchenko M.V."/>
            <person name="Sorokin A."/>
            <person name="Wolf Y.I."/>
            <person name="Li Q.X."/>
            <person name="Keum Y.S."/>
            <person name="Campbell S."/>
            <person name="Denery J."/>
            <person name="Aizawa S."/>
            <person name="Shibata S."/>
            <person name="Malahoff A."/>
            <person name="Alam M."/>
        </authorList>
    </citation>
    <scope>NUCLEOTIDE SEQUENCE [LARGE SCALE GENOMIC DNA]</scope>
    <source>
        <strain>ATCC BAA-735 / DSM 15497 / L2-TR</strain>
    </source>
</reference>
<keyword id="KW-0963">Cytoplasm</keyword>
<keyword id="KW-0489">Methyltransferase</keyword>
<keyword id="KW-1185">Reference proteome</keyword>
<keyword id="KW-0698">rRNA processing</keyword>
<keyword id="KW-0949">S-adenosyl-L-methionine</keyword>
<keyword id="KW-0808">Transferase</keyword>
<comment type="function">
    <text evidence="1">Specifically methylates the N7 position of guanine in position 527 of 16S rRNA.</text>
</comment>
<comment type="catalytic activity">
    <reaction evidence="1">
        <text>guanosine(527) in 16S rRNA + S-adenosyl-L-methionine = N(7)-methylguanosine(527) in 16S rRNA + S-adenosyl-L-homocysteine</text>
        <dbReference type="Rhea" id="RHEA:42732"/>
        <dbReference type="Rhea" id="RHEA-COMP:10209"/>
        <dbReference type="Rhea" id="RHEA-COMP:10210"/>
        <dbReference type="ChEBI" id="CHEBI:57856"/>
        <dbReference type="ChEBI" id="CHEBI:59789"/>
        <dbReference type="ChEBI" id="CHEBI:74269"/>
        <dbReference type="ChEBI" id="CHEBI:74480"/>
        <dbReference type="EC" id="2.1.1.170"/>
    </reaction>
</comment>
<comment type="subcellular location">
    <subcellularLocation>
        <location evidence="1">Cytoplasm</location>
    </subcellularLocation>
</comment>
<comment type="similarity">
    <text evidence="1">Belongs to the methyltransferase superfamily. RNA methyltransferase RsmG family.</text>
</comment>
<dbReference type="EC" id="2.1.1.170" evidence="1"/>
<dbReference type="EMBL" id="AE017340">
    <property type="protein sequence ID" value="AAV83461.1"/>
    <property type="molecule type" value="Genomic_DNA"/>
</dbReference>
<dbReference type="RefSeq" id="WP_011235852.1">
    <property type="nucleotide sequence ID" value="NC_006512.1"/>
</dbReference>
<dbReference type="SMR" id="Q5QZI9"/>
<dbReference type="STRING" id="283942.IL2629"/>
<dbReference type="GeneID" id="41337828"/>
<dbReference type="KEGG" id="ilo:IL2629"/>
<dbReference type="eggNOG" id="COG0357">
    <property type="taxonomic scope" value="Bacteria"/>
</dbReference>
<dbReference type="HOGENOM" id="CLU_065341_2_2_6"/>
<dbReference type="OrthoDB" id="9808773at2"/>
<dbReference type="Proteomes" id="UP000001171">
    <property type="component" value="Chromosome"/>
</dbReference>
<dbReference type="GO" id="GO:0005829">
    <property type="term" value="C:cytosol"/>
    <property type="evidence" value="ECO:0007669"/>
    <property type="project" value="TreeGrafter"/>
</dbReference>
<dbReference type="GO" id="GO:0070043">
    <property type="term" value="F:rRNA (guanine-N7-)-methyltransferase activity"/>
    <property type="evidence" value="ECO:0007669"/>
    <property type="project" value="UniProtKB-UniRule"/>
</dbReference>
<dbReference type="CDD" id="cd02440">
    <property type="entry name" value="AdoMet_MTases"/>
    <property type="match status" value="1"/>
</dbReference>
<dbReference type="FunFam" id="3.40.50.150:FF:000032">
    <property type="entry name" value="Ribosomal RNA small subunit methyltransferase G"/>
    <property type="match status" value="1"/>
</dbReference>
<dbReference type="Gene3D" id="3.40.50.150">
    <property type="entry name" value="Vaccinia Virus protein VP39"/>
    <property type="match status" value="1"/>
</dbReference>
<dbReference type="HAMAP" id="MF_00074">
    <property type="entry name" value="16SrRNA_methyltr_G"/>
    <property type="match status" value="1"/>
</dbReference>
<dbReference type="InterPro" id="IPR003682">
    <property type="entry name" value="rRNA_ssu_MeTfrase_G"/>
</dbReference>
<dbReference type="InterPro" id="IPR029063">
    <property type="entry name" value="SAM-dependent_MTases_sf"/>
</dbReference>
<dbReference type="NCBIfam" id="TIGR00138">
    <property type="entry name" value="rsmG_gidB"/>
    <property type="match status" value="1"/>
</dbReference>
<dbReference type="PANTHER" id="PTHR31760">
    <property type="entry name" value="S-ADENOSYL-L-METHIONINE-DEPENDENT METHYLTRANSFERASES SUPERFAMILY PROTEIN"/>
    <property type="match status" value="1"/>
</dbReference>
<dbReference type="PANTHER" id="PTHR31760:SF0">
    <property type="entry name" value="S-ADENOSYL-L-METHIONINE-DEPENDENT METHYLTRANSFERASES SUPERFAMILY PROTEIN"/>
    <property type="match status" value="1"/>
</dbReference>
<dbReference type="Pfam" id="PF02527">
    <property type="entry name" value="GidB"/>
    <property type="match status" value="1"/>
</dbReference>
<dbReference type="PIRSF" id="PIRSF003078">
    <property type="entry name" value="GidB"/>
    <property type="match status" value="1"/>
</dbReference>
<dbReference type="SUPFAM" id="SSF53335">
    <property type="entry name" value="S-adenosyl-L-methionine-dependent methyltransferases"/>
    <property type="match status" value="1"/>
</dbReference>
<protein>
    <recommendedName>
        <fullName evidence="1">Ribosomal RNA small subunit methyltransferase G</fullName>
        <ecNumber evidence="1">2.1.1.170</ecNumber>
    </recommendedName>
    <alternativeName>
        <fullName evidence="1">16S rRNA 7-methylguanosine methyltransferase</fullName>
        <shortName evidence="1">16S rRNA m7G methyltransferase</shortName>
    </alternativeName>
</protein>
<sequence>MKEQLKGLLDQAQINLSEAQIEQQLALVGLLDKWNKAYNLTSVRNPKDMLTRHIMDSLAVRQYLHGQRFIDVGTGPGLPGLPLAIAEPDNEFVLLDSLGKRIRFIRQVCHELKLTNVTAVQARVEDYQDEKQFDGVISRAFASLNDMLSWCEHLPAENGRFYALKGLYPQDELEQLPEQYKIESIEQINVPGIDASRHIVIISKRS</sequence>
<evidence type="ECO:0000255" key="1">
    <source>
        <dbReference type="HAMAP-Rule" id="MF_00074"/>
    </source>
</evidence>
<gene>
    <name evidence="1" type="primary">rsmG</name>
    <name type="ordered locus">IL2629</name>
</gene>
<name>RSMG_IDILO</name>
<organism>
    <name type="scientific">Idiomarina loihiensis (strain ATCC BAA-735 / DSM 15497 / L2-TR)</name>
    <dbReference type="NCBI Taxonomy" id="283942"/>
    <lineage>
        <taxon>Bacteria</taxon>
        <taxon>Pseudomonadati</taxon>
        <taxon>Pseudomonadota</taxon>
        <taxon>Gammaproteobacteria</taxon>
        <taxon>Alteromonadales</taxon>
        <taxon>Idiomarinaceae</taxon>
        <taxon>Idiomarina</taxon>
    </lineage>
</organism>
<feature type="chain" id="PRO_0000184265" description="Ribosomal RNA small subunit methyltransferase G">
    <location>
        <begin position="1"/>
        <end position="206"/>
    </location>
</feature>
<feature type="binding site" evidence="1">
    <location>
        <position position="73"/>
    </location>
    <ligand>
        <name>S-adenosyl-L-methionine</name>
        <dbReference type="ChEBI" id="CHEBI:59789"/>
    </ligand>
</feature>
<feature type="binding site" evidence="1">
    <location>
        <position position="78"/>
    </location>
    <ligand>
        <name>S-adenosyl-L-methionine</name>
        <dbReference type="ChEBI" id="CHEBI:59789"/>
    </ligand>
</feature>
<feature type="binding site" evidence="1">
    <location>
        <begin position="124"/>
        <end position="125"/>
    </location>
    <ligand>
        <name>S-adenosyl-L-methionine</name>
        <dbReference type="ChEBI" id="CHEBI:59789"/>
    </ligand>
</feature>
<feature type="binding site" evidence="1">
    <location>
        <position position="139"/>
    </location>
    <ligand>
        <name>S-adenosyl-L-methionine</name>
        <dbReference type="ChEBI" id="CHEBI:59789"/>
    </ligand>
</feature>
<accession>Q5QZI9</accession>
<proteinExistence type="inferred from homology"/>